<keyword id="KW-0520">NAD</keyword>
<keyword id="KW-0560">Oxidoreductase</keyword>
<keyword id="KW-1185">Reference proteome</keyword>
<comment type="catalytic activity">
    <reaction>
        <text>(E)-coniferaldehyde + NADP(+) + H2O = (E)-ferulate + NADPH + 2 H(+)</text>
        <dbReference type="Rhea" id="RHEA:23964"/>
        <dbReference type="ChEBI" id="CHEBI:15377"/>
        <dbReference type="ChEBI" id="CHEBI:15378"/>
        <dbReference type="ChEBI" id="CHEBI:16547"/>
        <dbReference type="ChEBI" id="CHEBI:29749"/>
        <dbReference type="ChEBI" id="CHEBI:57783"/>
        <dbReference type="ChEBI" id="CHEBI:58349"/>
        <dbReference type="EC" id="1.2.1.68"/>
    </reaction>
</comment>
<comment type="catalytic activity">
    <reaction>
        <text>(E)-coniferaldehyde + NAD(+) + H2O = (E)-ferulate + NADH + 2 H(+)</text>
        <dbReference type="Rhea" id="RHEA:23968"/>
        <dbReference type="ChEBI" id="CHEBI:15377"/>
        <dbReference type="ChEBI" id="CHEBI:15378"/>
        <dbReference type="ChEBI" id="CHEBI:16547"/>
        <dbReference type="ChEBI" id="CHEBI:29749"/>
        <dbReference type="ChEBI" id="CHEBI:57540"/>
        <dbReference type="ChEBI" id="CHEBI:57945"/>
        <dbReference type="EC" id="1.2.1.68"/>
    </reaction>
</comment>
<comment type="subunit">
    <text evidence="1">Homodimer.</text>
</comment>
<comment type="similarity">
    <text evidence="3">Belongs to the aldehyde dehydrogenase family.</text>
</comment>
<feature type="chain" id="PRO_0000056587" description="Probable coniferyl aldehyde dehydrogenase">
    <location>
        <begin position="1"/>
        <end position="476"/>
    </location>
</feature>
<feature type="active site" evidence="2">
    <location>
        <position position="225"/>
    </location>
</feature>
<feature type="active site" evidence="2">
    <location>
        <position position="259"/>
    </location>
</feature>
<dbReference type="EC" id="1.2.1.68"/>
<dbReference type="EMBL" id="AE004091">
    <property type="protein sequence ID" value="AAG03755.1"/>
    <property type="molecule type" value="Genomic_DNA"/>
</dbReference>
<dbReference type="PIR" id="D83600">
    <property type="entry name" value="D83600"/>
</dbReference>
<dbReference type="RefSeq" id="NP_249057.1">
    <property type="nucleotide sequence ID" value="NC_002516.2"/>
</dbReference>
<dbReference type="RefSeq" id="WP_003102868.1">
    <property type="nucleotide sequence ID" value="NZ_QZGE01000016.1"/>
</dbReference>
<dbReference type="SMR" id="Q9I6C8"/>
<dbReference type="STRING" id="208964.PA0366"/>
<dbReference type="PaxDb" id="208964-PA0366"/>
<dbReference type="GeneID" id="880299"/>
<dbReference type="KEGG" id="pae:PA0366"/>
<dbReference type="PATRIC" id="fig|208964.12.peg.385"/>
<dbReference type="PseudoCAP" id="PA0366"/>
<dbReference type="HOGENOM" id="CLU_005391_3_6_6"/>
<dbReference type="InParanoid" id="Q9I6C8"/>
<dbReference type="OrthoDB" id="9812625at2"/>
<dbReference type="PhylomeDB" id="Q9I6C8"/>
<dbReference type="BioCyc" id="PAER208964:G1FZ6-369-MONOMER"/>
<dbReference type="Proteomes" id="UP000002438">
    <property type="component" value="Chromosome"/>
</dbReference>
<dbReference type="GO" id="GO:0005737">
    <property type="term" value="C:cytoplasm"/>
    <property type="evidence" value="ECO:0000318"/>
    <property type="project" value="GO_Central"/>
</dbReference>
<dbReference type="GO" id="GO:0004029">
    <property type="term" value="F:aldehyde dehydrogenase (NAD+) activity"/>
    <property type="evidence" value="ECO:0000318"/>
    <property type="project" value="GO_Central"/>
</dbReference>
<dbReference type="GO" id="GO:0050269">
    <property type="term" value="F:coniferyl-aldehyde dehydrogenase [NAD(P)+] activity"/>
    <property type="evidence" value="ECO:0007669"/>
    <property type="project" value="UniProtKB-EC"/>
</dbReference>
<dbReference type="GO" id="GO:0006081">
    <property type="term" value="P:aldehyde metabolic process"/>
    <property type="evidence" value="ECO:0000318"/>
    <property type="project" value="GO_Central"/>
</dbReference>
<dbReference type="CDD" id="cd07133">
    <property type="entry name" value="ALDH_CALDH_CalB"/>
    <property type="match status" value="1"/>
</dbReference>
<dbReference type="FunFam" id="3.40.309.10:FF:000003">
    <property type="entry name" value="Aldehyde dehydrogenase"/>
    <property type="match status" value="1"/>
</dbReference>
<dbReference type="FunFam" id="3.40.605.10:FF:000004">
    <property type="entry name" value="Aldehyde dehydrogenase"/>
    <property type="match status" value="1"/>
</dbReference>
<dbReference type="Gene3D" id="3.40.605.10">
    <property type="entry name" value="Aldehyde Dehydrogenase, Chain A, domain 1"/>
    <property type="match status" value="1"/>
</dbReference>
<dbReference type="Gene3D" id="3.40.309.10">
    <property type="entry name" value="Aldehyde Dehydrogenase, Chain A, domain 2"/>
    <property type="match status" value="1"/>
</dbReference>
<dbReference type="InterPro" id="IPR016161">
    <property type="entry name" value="Ald_DH/histidinol_DH"/>
</dbReference>
<dbReference type="InterPro" id="IPR016163">
    <property type="entry name" value="Ald_DH_C"/>
</dbReference>
<dbReference type="InterPro" id="IPR029510">
    <property type="entry name" value="Ald_DH_CS_GLU"/>
</dbReference>
<dbReference type="InterPro" id="IPR016162">
    <property type="entry name" value="Ald_DH_N"/>
</dbReference>
<dbReference type="InterPro" id="IPR015590">
    <property type="entry name" value="Aldehyde_DH_dom"/>
</dbReference>
<dbReference type="InterPro" id="IPR012394">
    <property type="entry name" value="Aldehyde_DH_NAD(P)"/>
</dbReference>
<dbReference type="PANTHER" id="PTHR43570">
    <property type="entry name" value="ALDEHYDE DEHYDROGENASE"/>
    <property type="match status" value="1"/>
</dbReference>
<dbReference type="PANTHER" id="PTHR43570:SF20">
    <property type="entry name" value="ALDEHYDE DEHYDROGENASE ALDX-RELATED"/>
    <property type="match status" value="1"/>
</dbReference>
<dbReference type="Pfam" id="PF00171">
    <property type="entry name" value="Aldedh"/>
    <property type="match status" value="1"/>
</dbReference>
<dbReference type="PIRSF" id="PIRSF036492">
    <property type="entry name" value="ALDH"/>
    <property type="match status" value="1"/>
</dbReference>
<dbReference type="SUPFAM" id="SSF53720">
    <property type="entry name" value="ALDH-like"/>
    <property type="match status" value="1"/>
</dbReference>
<dbReference type="PROSITE" id="PS00687">
    <property type="entry name" value="ALDEHYDE_DEHYDR_GLU"/>
    <property type="match status" value="1"/>
</dbReference>
<accession>Q9I6C8</accession>
<proteinExistence type="inferred from homology"/>
<evidence type="ECO:0000250" key="1"/>
<evidence type="ECO:0000255" key="2">
    <source>
        <dbReference type="PROSITE-ProRule" id="PRU10007"/>
    </source>
</evidence>
<evidence type="ECO:0000305" key="3"/>
<gene>
    <name type="primary">calB</name>
    <name type="ordered locus">PA0366</name>
</gene>
<sequence>MVADIAYLQQSQQEINQLEALFARQRAAYLAQPMPDATQRVQWLKALRDLLFKEQQALIEAIDRDFSARSADETLLAEIMPSLHGIHYAAKRVKKWMKPARRAVGLQFQPASAQVVYQPLGVVGVIVPWNYPLFLSIGPLTGALAAGNRVMIKMSESTPATGRLLKDLLARIFPEDQVAVVLGEVDVGVAFSKLPFDHLLFTGATSVGKHVMRAAAENLTPVTLELGGKSPAIVSDSVPMKDAAERIAFGKSLNAGQTCVAPDYVLVPSRRVEEFVSQYKEVVQGFFPRLSDNPDYTAIINERQLGRLRGYLDDAREKGATLVPLFAEGQQRRLPQTLLLNVSDDMKVMQEEIFGPLLPVIPYERLEDALAYVNQRPRPLALYYFGYDKAQQQRVLHETHSGGVCLNDTLLHVAQDDIPFGGVGPSGMGHYHGHEGFLTFSKAKGVFSKPRFNAARMIYPPYGKSIQKLVYKLFVR</sequence>
<organism>
    <name type="scientific">Pseudomonas aeruginosa (strain ATCC 15692 / DSM 22644 / CIP 104116 / JCM 14847 / LMG 12228 / 1C / PRS 101 / PAO1)</name>
    <dbReference type="NCBI Taxonomy" id="208964"/>
    <lineage>
        <taxon>Bacteria</taxon>
        <taxon>Pseudomonadati</taxon>
        <taxon>Pseudomonadota</taxon>
        <taxon>Gammaproteobacteria</taxon>
        <taxon>Pseudomonadales</taxon>
        <taxon>Pseudomonadaceae</taxon>
        <taxon>Pseudomonas</taxon>
    </lineage>
</organism>
<protein>
    <recommendedName>
        <fullName>Probable coniferyl aldehyde dehydrogenase</fullName>
        <shortName>CALDH</shortName>
        <ecNumber>1.2.1.68</ecNumber>
    </recommendedName>
</protein>
<reference key="1">
    <citation type="journal article" date="2000" name="Nature">
        <title>Complete genome sequence of Pseudomonas aeruginosa PAO1, an opportunistic pathogen.</title>
        <authorList>
            <person name="Stover C.K."/>
            <person name="Pham X.-Q.T."/>
            <person name="Erwin A.L."/>
            <person name="Mizoguchi S.D."/>
            <person name="Warrener P."/>
            <person name="Hickey M.J."/>
            <person name="Brinkman F.S.L."/>
            <person name="Hufnagle W.O."/>
            <person name="Kowalik D.J."/>
            <person name="Lagrou M."/>
            <person name="Garber R.L."/>
            <person name="Goltry L."/>
            <person name="Tolentino E."/>
            <person name="Westbrock-Wadman S."/>
            <person name="Yuan Y."/>
            <person name="Brody L.L."/>
            <person name="Coulter S.N."/>
            <person name="Folger K.R."/>
            <person name="Kas A."/>
            <person name="Larbig K."/>
            <person name="Lim R.M."/>
            <person name="Smith K.A."/>
            <person name="Spencer D.H."/>
            <person name="Wong G.K.-S."/>
            <person name="Wu Z."/>
            <person name="Paulsen I.T."/>
            <person name="Reizer J."/>
            <person name="Saier M.H. Jr."/>
            <person name="Hancock R.E.W."/>
            <person name="Lory S."/>
            <person name="Olson M.V."/>
        </authorList>
    </citation>
    <scope>NUCLEOTIDE SEQUENCE [LARGE SCALE GENOMIC DNA]</scope>
    <source>
        <strain>ATCC 15692 / DSM 22644 / CIP 104116 / JCM 14847 / LMG 12228 / 1C / PRS 101 / PAO1</strain>
    </source>
</reference>
<name>CALB_PSEAE</name>